<keyword id="KW-0028">Amino-acid biosynthesis</keyword>
<keyword id="KW-0057">Aromatic amino acid biosynthesis</keyword>
<keyword id="KW-0150">Chloroplast</keyword>
<keyword id="KW-0456">Lyase</keyword>
<keyword id="KW-0934">Plastid</keyword>
<keyword id="KW-1185">Reference proteome</keyword>
<keyword id="KW-0822">Tryptophan biosynthesis</keyword>
<comment type="function">
    <text evidence="1">The alpha subunit is responsible for the aldol cleavage of indoleglycerol phosphate to indole and glyceraldehyde 3-phosphate.</text>
</comment>
<comment type="catalytic activity">
    <reaction evidence="1">
        <text>(1S,2R)-1-C-(indol-3-yl)glycerol 3-phosphate + L-serine = D-glyceraldehyde 3-phosphate + L-tryptophan + H2O</text>
        <dbReference type="Rhea" id="RHEA:10532"/>
        <dbReference type="ChEBI" id="CHEBI:15377"/>
        <dbReference type="ChEBI" id="CHEBI:33384"/>
        <dbReference type="ChEBI" id="CHEBI:57912"/>
        <dbReference type="ChEBI" id="CHEBI:58866"/>
        <dbReference type="ChEBI" id="CHEBI:59776"/>
        <dbReference type="EC" id="4.2.1.20"/>
    </reaction>
</comment>
<comment type="pathway">
    <text evidence="1">Amino-acid biosynthesis; L-tryptophan biosynthesis; L-tryptophan from chorismate: step 5/5.</text>
</comment>
<comment type="subunit">
    <text evidence="1">Tetramer of two alpha and two beta chains.</text>
</comment>
<comment type="subcellular location">
    <subcellularLocation>
        <location>Plastid</location>
        <location>Chloroplast</location>
    </subcellularLocation>
</comment>
<comment type="similarity">
    <text evidence="1">Belongs to the TrpA family.</text>
</comment>
<proteinExistence type="inferred from homology"/>
<feature type="chain" id="PRO_0000098905" description="Tryptophan synthase alpha chain">
    <location>
        <begin position="1"/>
        <end position="243"/>
    </location>
</feature>
<feature type="active site" description="Proton acceptor" evidence="1">
    <location>
        <position position="32"/>
    </location>
</feature>
<feature type="active site" description="Proton acceptor" evidence="1">
    <location>
        <position position="43"/>
    </location>
</feature>
<feature type="sequence conflict" description="In Ref. 1; BAA22814." evidence="2" ref="1">
    <original>A</original>
    <variation>P</variation>
    <location>
        <position position="40"/>
    </location>
</feature>
<feature type="sequence conflict" description="In Ref. 1; BAA22814." evidence="2" ref="1">
    <original>N</original>
    <variation>Y</variation>
    <location>
        <position position="103"/>
    </location>
</feature>
<organism>
    <name type="scientific">Cyanidioschyzon merolae (strain NIES-3377 / 10D)</name>
    <name type="common">Unicellular red alga</name>
    <dbReference type="NCBI Taxonomy" id="280699"/>
    <lineage>
        <taxon>Eukaryota</taxon>
        <taxon>Rhodophyta</taxon>
        <taxon>Bangiophyceae</taxon>
        <taxon>Cyanidiales</taxon>
        <taxon>Cyanidiaceae</taxon>
        <taxon>Cyanidioschyzon</taxon>
    </lineage>
</organism>
<gene>
    <name evidence="1" type="primary">trpA</name>
</gene>
<evidence type="ECO:0000255" key="1">
    <source>
        <dbReference type="HAMAP-Rule" id="MF_00131"/>
    </source>
</evidence>
<evidence type="ECO:0000305" key="2"/>
<accession>O22018</accession>
<dbReference type="EC" id="4.2.1.20" evidence="1"/>
<dbReference type="EMBL" id="D63675">
    <property type="protein sequence ID" value="BAA22814.1"/>
    <property type="molecule type" value="Genomic_DNA"/>
</dbReference>
<dbReference type="EMBL" id="AB002583">
    <property type="protein sequence ID" value="BAC76101.1"/>
    <property type="molecule type" value="Genomic_DNA"/>
</dbReference>
<dbReference type="RefSeq" id="NP_848939.1">
    <property type="nucleotide sequence ID" value="NC_004799.1"/>
</dbReference>
<dbReference type="SMR" id="O22018"/>
<dbReference type="STRING" id="280699.O22018"/>
<dbReference type="EnsemblPlants" id="CMV006CT">
    <property type="protein sequence ID" value="CMV006CT"/>
    <property type="gene ID" value="CMV006C"/>
</dbReference>
<dbReference type="GeneID" id="845057"/>
<dbReference type="Gramene" id="CMV006CT">
    <property type="protein sequence ID" value="CMV006CT"/>
    <property type="gene ID" value="CMV006C"/>
</dbReference>
<dbReference type="KEGG" id="cme:CymeCp007"/>
<dbReference type="eggNOG" id="KOG4175">
    <property type="taxonomic scope" value="Eukaryota"/>
</dbReference>
<dbReference type="HOGENOM" id="CLU_016734_0_2_1"/>
<dbReference type="UniPathway" id="UPA00035">
    <property type="reaction ID" value="UER00044"/>
</dbReference>
<dbReference type="Proteomes" id="UP000007014">
    <property type="component" value="Chloroplast"/>
</dbReference>
<dbReference type="GO" id="GO:0009507">
    <property type="term" value="C:chloroplast"/>
    <property type="evidence" value="ECO:0007669"/>
    <property type="project" value="UniProtKB-SubCell"/>
</dbReference>
<dbReference type="GO" id="GO:0005829">
    <property type="term" value="C:cytosol"/>
    <property type="evidence" value="ECO:0007669"/>
    <property type="project" value="TreeGrafter"/>
</dbReference>
<dbReference type="GO" id="GO:0004834">
    <property type="term" value="F:tryptophan synthase activity"/>
    <property type="evidence" value="ECO:0007669"/>
    <property type="project" value="UniProtKB-UniRule"/>
</dbReference>
<dbReference type="CDD" id="cd04724">
    <property type="entry name" value="Tryptophan_synthase_alpha"/>
    <property type="match status" value="1"/>
</dbReference>
<dbReference type="FunFam" id="3.20.20.70:FF:000037">
    <property type="entry name" value="Tryptophan synthase alpha chain"/>
    <property type="match status" value="1"/>
</dbReference>
<dbReference type="Gene3D" id="3.20.20.70">
    <property type="entry name" value="Aldolase class I"/>
    <property type="match status" value="1"/>
</dbReference>
<dbReference type="HAMAP" id="MF_00131">
    <property type="entry name" value="Trp_synth_alpha"/>
    <property type="match status" value="1"/>
</dbReference>
<dbReference type="InterPro" id="IPR013785">
    <property type="entry name" value="Aldolase_TIM"/>
</dbReference>
<dbReference type="InterPro" id="IPR011060">
    <property type="entry name" value="RibuloseP-bd_barrel"/>
</dbReference>
<dbReference type="InterPro" id="IPR018204">
    <property type="entry name" value="Trp_synthase_alpha_AS"/>
</dbReference>
<dbReference type="InterPro" id="IPR002028">
    <property type="entry name" value="Trp_synthase_suA"/>
</dbReference>
<dbReference type="NCBIfam" id="TIGR00262">
    <property type="entry name" value="trpA"/>
    <property type="match status" value="1"/>
</dbReference>
<dbReference type="PANTHER" id="PTHR43406:SF1">
    <property type="entry name" value="TRYPTOPHAN SYNTHASE ALPHA CHAIN, CHLOROPLASTIC"/>
    <property type="match status" value="1"/>
</dbReference>
<dbReference type="PANTHER" id="PTHR43406">
    <property type="entry name" value="TRYPTOPHAN SYNTHASE, ALPHA CHAIN"/>
    <property type="match status" value="1"/>
</dbReference>
<dbReference type="Pfam" id="PF00290">
    <property type="entry name" value="Trp_syntA"/>
    <property type="match status" value="1"/>
</dbReference>
<dbReference type="SUPFAM" id="SSF51366">
    <property type="entry name" value="Ribulose-phoshate binding barrel"/>
    <property type="match status" value="1"/>
</dbReference>
<dbReference type="PROSITE" id="PS00167">
    <property type="entry name" value="TRP_SYNTHASE_ALPHA"/>
    <property type="match status" value="1"/>
</dbReference>
<protein>
    <recommendedName>
        <fullName evidence="1">Tryptophan synthase alpha chain</fullName>
        <ecNumber evidence="1">4.2.1.20</ecNumber>
    </recommendedName>
</protein>
<sequence length="243" mass="27010">MLIAYLTAGAPDINTTKEAVMKLAKKGADVIEIGVPYSDALADGAILQKASKQALMNGFHLDHLWNLLSEVNEIEVPLVILAYYNQIWHYGVEKWVKKLVAHNVKGLIVPDLPYEESKTLRQICDRYGLNIIWLISPTTNKTRAQELARACKDWIYVISRTGVTGLETEFDKQIPKLIGELKKVTKAPIALGFGISKSEQVKLVKSWGADGVIIGSACMQILLEKGVDQLSEWISVMKKSFCP</sequence>
<geneLocation type="chloroplast"/>
<name>TRPA_CYAM1</name>
<reference key="1">
    <citation type="journal article" date="1997" name="J. Plant Res.">
        <title>Analysis of a plastid gene cluster reveals a close relationship between Cyanidioschyzon and Cyanidium.</title>
        <authorList>
            <person name="Ohta N."/>
            <person name="Sato N."/>
            <person name="Ueda K."/>
            <person name="Kuroiwa T."/>
        </authorList>
    </citation>
    <scope>NUCLEOTIDE SEQUENCE [GENOMIC DNA]</scope>
</reference>
<reference key="2">
    <citation type="journal article" date="2003" name="DNA Res.">
        <title>Complete sequence and analysis of the plastid genome of the unicellular red alga Cyanidioschyzon merolae.</title>
        <authorList>
            <person name="Ohta N."/>
            <person name="Matsuzaki M."/>
            <person name="Misumi O."/>
            <person name="Miyagishima S.-Y."/>
            <person name="Nozaki H."/>
            <person name="Tanaka K."/>
            <person name="Shin-i T."/>
            <person name="Kohara Y."/>
            <person name="Kuroiwa T."/>
        </authorList>
    </citation>
    <scope>NUCLEOTIDE SEQUENCE [LARGE SCALE GENOMIC DNA]</scope>
    <source>
        <strain>NIES-3377 / 10D</strain>
    </source>
</reference>